<gene>
    <name evidence="1" type="primary">rpmE</name>
    <name type="ordered locus">EUBELI_01445</name>
</gene>
<accession>C4Z1S7</accession>
<evidence type="ECO:0000255" key="1">
    <source>
        <dbReference type="HAMAP-Rule" id="MF_00501"/>
    </source>
</evidence>
<evidence type="ECO:0000305" key="2"/>
<dbReference type="EMBL" id="CP001104">
    <property type="protein sequence ID" value="ACR72438.1"/>
    <property type="molecule type" value="Genomic_DNA"/>
</dbReference>
<dbReference type="RefSeq" id="WP_012739673.1">
    <property type="nucleotide sequence ID" value="NC_012778.1"/>
</dbReference>
<dbReference type="SMR" id="C4Z1S7"/>
<dbReference type="STRING" id="515620.EUBELI_01445"/>
<dbReference type="GeneID" id="41356147"/>
<dbReference type="KEGG" id="eel:EUBELI_01445"/>
<dbReference type="eggNOG" id="COG0254">
    <property type="taxonomic scope" value="Bacteria"/>
</dbReference>
<dbReference type="HOGENOM" id="CLU_114306_4_3_9"/>
<dbReference type="Proteomes" id="UP000001476">
    <property type="component" value="Chromosome"/>
</dbReference>
<dbReference type="GO" id="GO:1990904">
    <property type="term" value="C:ribonucleoprotein complex"/>
    <property type="evidence" value="ECO:0007669"/>
    <property type="project" value="UniProtKB-KW"/>
</dbReference>
<dbReference type="GO" id="GO:0005840">
    <property type="term" value="C:ribosome"/>
    <property type="evidence" value="ECO:0007669"/>
    <property type="project" value="UniProtKB-KW"/>
</dbReference>
<dbReference type="GO" id="GO:0046872">
    <property type="term" value="F:metal ion binding"/>
    <property type="evidence" value="ECO:0007669"/>
    <property type="project" value="UniProtKB-KW"/>
</dbReference>
<dbReference type="GO" id="GO:0019843">
    <property type="term" value="F:rRNA binding"/>
    <property type="evidence" value="ECO:0007669"/>
    <property type="project" value="UniProtKB-KW"/>
</dbReference>
<dbReference type="GO" id="GO:0003735">
    <property type="term" value="F:structural constituent of ribosome"/>
    <property type="evidence" value="ECO:0007669"/>
    <property type="project" value="InterPro"/>
</dbReference>
<dbReference type="GO" id="GO:0006412">
    <property type="term" value="P:translation"/>
    <property type="evidence" value="ECO:0007669"/>
    <property type="project" value="UniProtKB-UniRule"/>
</dbReference>
<dbReference type="Gene3D" id="4.10.830.30">
    <property type="entry name" value="Ribosomal protein L31"/>
    <property type="match status" value="1"/>
</dbReference>
<dbReference type="HAMAP" id="MF_00501">
    <property type="entry name" value="Ribosomal_bL31_1"/>
    <property type="match status" value="1"/>
</dbReference>
<dbReference type="InterPro" id="IPR034704">
    <property type="entry name" value="Ribosomal_bL28/bL31-like_sf"/>
</dbReference>
<dbReference type="InterPro" id="IPR002150">
    <property type="entry name" value="Ribosomal_bL31"/>
</dbReference>
<dbReference type="InterPro" id="IPR027491">
    <property type="entry name" value="Ribosomal_bL31_A"/>
</dbReference>
<dbReference type="InterPro" id="IPR042105">
    <property type="entry name" value="Ribosomal_bL31_sf"/>
</dbReference>
<dbReference type="NCBIfam" id="TIGR00105">
    <property type="entry name" value="L31"/>
    <property type="match status" value="1"/>
</dbReference>
<dbReference type="NCBIfam" id="NF000612">
    <property type="entry name" value="PRK00019.1"/>
    <property type="match status" value="1"/>
</dbReference>
<dbReference type="NCBIfam" id="NF001809">
    <property type="entry name" value="PRK00528.1"/>
    <property type="match status" value="1"/>
</dbReference>
<dbReference type="PANTHER" id="PTHR33280">
    <property type="entry name" value="50S RIBOSOMAL PROTEIN L31, CHLOROPLASTIC"/>
    <property type="match status" value="1"/>
</dbReference>
<dbReference type="PANTHER" id="PTHR33280:SF1">
    <property type="entry name" value="LARGE RIBOSOMAL SUBUNIT PROTEIN BL31C"/>
    <property type="match status" value="1"/>
</dbReference>
<dbReference type="Pfam" id="PF01197">
    <property type="entry name" value="Ribosomal_L31"/>
    <property type="match status" value="1"/>
</dbReference>
<dbReference type="PRINTS" id="PR01249">
    <property type="entry name" value="RIBOSOMALL31"/>
</dbReference>
<dbReference type="SUPFAM" id="SSF143800">
    <property type="entry name" value="L28p-like"/>
    <property type="match status" value="1"/>
</dbReference>
<dbReference type="PROSITE" id="PS01143">
    <property type="entry name" value="RIBOSOMAL_L31"/>
    <property type="match status" value="1"/>
</dbReference>
<proteinExistence type="inferred from homology"/>
<feature type="chain" id="PRO_1000206522" description="Large ribosomal subunit protein bL31">
    <location>
        <begin position="1"/>
        <end position="68"/>
    </location>
</feature>
<feature type="binding site" evidence="1">
    <location>
        <position position="16"/>
    </location>
    <ligand>
        <name>Zn(2+)</name>
        <dbReference type="ChEBI" id="CHEBI:29105"/>
    </ligand>
</feature>
<feature type="binding site" evidence="1">
    <location>
        <position position="18"/>
    </location>
    <ligand>
        <name>Zn(2+)</name>
        <dbReference type="ChEBI" id="CHEBI:29105"/>
    </ligand>
</feature>
<feature type="binding site" evidence="1">
    <location>
        <position position="36"/>
    </location>
    <ligand>
        <name>Zn(2+)</name>
        <dbReference type="ChEBI" id="CHEBI:29105"/>
    </ligand>
</feature>
<feature type="binding site" evidence="1">
    <location>
        <position position="39"/>
    </location>
    <ligand>
        <name>Zn(2+)</name>
        <dbReference type="ChEBI" id="CHEBI:29105"/>
    </ligand>
</feature>
<reference key="1">
    <citation type="journal article" date="2009" name="Proc. Natl. Acad. Sci. U.S.A.">
        <title>Characterizing a model human gut microbiota composed of members of its two dominant bacterial phyla.</title>
        <authorList>
            <person name="Mahowald M.A."/>
            <person name="Rey F.E."/>
            <person name="Seedorf H."/>
            <person name="Turnbaugh P.J."/>
            <person name="Fulton R.S."/>
            <person name="Wollam A."/>
            <person name="Shah N."/>
            <person name="Wang C."/>
            <person name="Magrini V."/>
            <person name="Wilson R.K."/>
            <person name="Cantarel B.L."/>
            <person name="Coutinho P.M."/>
            <person name="Henrissat B."/>
            <person name="Crock L.W."/>
            <person name="Russell A."/>
            <person name="Verberkmoes N.C."/>
            <person name="Hettich R.L."/>
            <person name="Gordon J.I."/>
        </authorList>
    </citation>
    <scope>NUCLEOTIDE SEQUENCE [LARGE SCALE GENOMIC DNA]</scope>
    <source>
        <strain>ATCC 27750 / DSM 3376 / VPI C15-48 / C15-B4</strain>
    </source>
</reference>
<sequence length="68" mass="7731">MREGIHPDYYQAKVVCNCGNEFVTGSTKEEIHVEICSKCHPFYTGQQKASSTRGRIDKFNKKYGVSNN</sequence>
<keyword id="KW-0479">Metal-binding</keyword>
<keyword id="KW-1185">Reference proteome</keyword>
<keyword id="KW-0687">Ribonucleoprotein</keyword>
<keyword id="KW-0689">Ribosomal protein</keyword>
<keyword id="KW-0694">RNA-binding</keyword>
<keyword id="KW-0699">rRNA-binding</keyword>
<keyword id="KW-0862">Zinc</keyword>
<comment type="function">
    <text evidence="1">Binds the 23S rRNA.</text>
</comment>
<comment type="cofactor">
    <cofactor evidence="1">
        <name>Zn(2+)</name>
        <dbReference type="ChEBI" id="CHEBI:29105"/>
    </cofactor>
    <text evidence="1">Binds 1 zinc ion per subunit.</text>
</comment>
<comment type="subunit">
    <text evidence="1">Part of the 50S ribosomal subunit.</text>
</comment>
<comment type="similarity">
    <text evidence="1">Belongs to the bacterial ribosomal protein bL31 family. Type A subfamily.</text>
</comment>
<organism>
    <name type="scientific">Lachnospira eligens (strain ATCC 27750 / DSM 3376 / VPI C15-48 / C15-B4)</name>
    <name type="common">Eubacterium eligens</name>
    <dbReference type="NCBI Taxonomy" id="515620"/>
    <lineage>
        <taxon>Bacteria</taxon>
        <taxon>Bacillati</taxon>
        <taxon>Bacillota</taxon>
        <taxon>Clostridia</taxon>
        <taxon>Lachnospirales</taxon>
        <taxon>Lachnospiraceae</taxon>
        <taxon>Lachnospira</taxon>
    </lineage>
</organism>
<protein>
    <recommendedName>
        <fullName evidence="1">Large ribosomal subunit protein bL31</fullName>
    </recommendedName>
    <alternativeName>
        <fullName evidence="2">50S ribosomal protein L31</fullName>
    </alternativeName>
</protein>
<name>RL31_LACE2</name>